<gene>
    <name type="primary">LYZ</name>
    <name type="synonym">LZM</name>
</gene>
<comment type="function">
    <text>Lysozymes have primarily a bacteriolytic function; those in tissues and body fluids are associated with the monocyte-macrophage system and enhance the activity of immunoagents.</text>
</comment>
<comment type="catalytic activity">
    <reaction>
        <text>Hydrolysis of (1-&gt;4)-beta-linkages between N-acetylmuramic acid and N-acetyl-D-glucosamine residues in a peptidoglycan and between N-acetyl-D-glucosamine residues in chitodextrins.</text>
        <dbReference type="EC" id="3.2.1.17"/>
    </reaction>
</comment>
<comment type="subunit">
    <text>Monomer.</text>
</comment>
<comment type="miscellaneous">
    <text>Lysozyme C is capable of both hydrolysis and transglycosylation; it also shows a slight esterase activity. It acts rapidly on both peptide-substituted and unsubstituted peptidoglycan, and slowly on chitin oligosaccharides.</text>
</comment>
<comment type="similarity">
    <text evidence="2">Belongs to the glycosyl hydrolase 22 family.</text>
</comment>
<organism>
    <name type="scientific">Erythrocebus patas</name>
    <name type="common">Red guenon</name>
    <name type="synonym">Cercopithecus patas</name>
    <dbReference type="NCBI Taxonomy" id="9538"/>
    <lineage>
        <taxon>Eukaryota</taxon>
        <taxon>Metazoa</taxon>
        <taxon>Chordata</taxon>
        <taxon>Craniata</taxon>
        <taxon>Vertebrata</taxon>
        <taxon>Euteleostomi</taxon>
        <taxon>Mammalia</taxon>
        <taxon>Eutheria</taxon>
        <taxon>Euarchontoglires</taxon>
        <taxon>Primates</taxon>
        <taxon>Haplorrhini</taxon>
        <taxon>Catarrhini</taxon>
        <taxon>Cercopithecidae</taxon>
        <taxon>Cercopithecinae</taxon>
        <taxon>Erythrocebus</taxon>
    </lineage>
</organism>
<proteinExistence type="inferred from homology"/>
<feature type="signal peptide" evidence="1">
    <location>
        <begin position="1"/>
        <end position="18"/>
    </location>
</feature>
<feature type="chain" id="PRO_0000018464" description="Lysozyme C">
    <location>
        <begin position="19"/>
        <end position="148"/>
    </location>
</feature>
<feature type="domain" description="C-type lysozyme" evidence="2">
    <location>
        <begin position="19"/>
        <end position="148"/>
    </location>
</feature>
<feature type="active site" evidence="2">
    <location>
        <position position="53"/>
    </location>
</feature>
<feature type="active site" evidence="2">
    <location>
        <position position="71"/>
    </location>
</feature>
<feature type="disulfide bond" evidence="2">
    <location>
        <begin position="24"/>
        <end position="146"/>
    </location>
</feature>
<feature type="disulfide bond" evidence="2">
    <location>
        <begin position="48"/>
        <end position="134"/>
    </location>
</feature>
<feature type="disulfide bond" evidence="2">
    <location>
        <begin position="83"/>
        <end position="99"/>
    </location>
</feature>
<feature type="disulfide bond" evidence="2">
    <location>
        <begin position="95"/>
        <end position="113"/>
    </location>
</feature>
<evidence type="ECO:0000250" key="1"/>
<evidence type="ECO:0000255" key="2">
    <source>
        <dbReference type="PROSITE-ProRule" id="PRU00680"/>
    </source>
</evidence>
<dbReference type="EC" id="3.2.1.17"/>
<dbReference type="EMBL" id="U76959">
    <property type="protein sequence ID" value="AAB41221.1"/>
    <property type="molecule type" value="Genomic_DNA"/>
</dbReference>
<dbReference type="EMBL" id="U76956">
    <property type="protein sequence ID" value="AAB41221.1"/>
    <property type="status" value="JOINED"/>
    <property type="molecule type" value="Genomic_DNA"/>
</dbReference>
<dbReference type="EMBL" id="U76957">
    <property type="protein sequence ID" value="AAB41221.1"/>
    <property type="status" value="JOINED"/>
    <property type="molecule type" value="Genomic_DNA"/>
</dbReference>
<dbReference type="EMBL" id="U76958">
    <property type="protein sequence ID" value="AAB41221.1"/>
    <property type="status" value="JOINED"/>
    <property type="molecule type" value="Genomic_DNA"/>
</dbReference>
<dbReference type="SMR" id="P61634"/>
<dbReference type="CAZy" id="GH22">
    <property type="family name" value="Glycoside Hydrolase Family 22"/>
</dbReference>
<dbReference type="GO" id="GO:0003796">
    <property type="term" value="F:lysozyme activity"/>
    <property type="evidence" value="ECO:0007669"/>
    <property type="project" value="UniProtKB-EC"/>
</dbReference>
<dbReference type="GO" id="GO:0050829">
    <property type="term" value="P:defense response to Gram-negative bacterium"/>
    <property type="evidence" value="ECO:0007669"/>
    <property type="project" value="TreeGrafter"/>
</dbReference>
<dbReference type="GO" id="GO:0050830">
    <property type="term" value="P:defense response to Gram-positive bacterium"/>
    <property type="evidence" value="ECO:0007669"/>
    <property type="project" value="TreeGrafter"/>
</dbReference>
<dbReference type="GO" id="GO:0031640">
    <property type="term" value="P:killing of cells of another organism"/>
    <property type="evidence" value="ECO:0007669"/>
    <property type="project" value="UniProtKB-KW"/>
</dbReference>
<dbReference type="CDD" id="cd16897">
    <property type="entry name" value="LYZ_C"/>
    <property type="match status" value="1"/>
</dbReference>
<dbReference type="FunFam" id="1.10.530.10:FF:000001">
    <property type="entry name" value="Lysozyme C"/>
    <property type="match status" value="1"/>
</dbReference>
<dbReference type="Gene3D" id="1.10.530.10">
    <property type="match status" value="1"/>
</dbReference>
<dbReference type="InterPro" id="IPR001916">
    <property type="entry name" value="Glyco_hydro_22"/>
</dbReference>
<dbReference type="InterPro" id="IPR019799">
    <property type="entry name" value="Glyco_hydro_22_CS"/>
</dbReference>
<dbReference type="InterPro" id="IPR000974">
    <property type="entry name" value="Glyco_hydro_22_lys"/>
</dbReference>
<dbReference type="InterPro" id="IPR023346">
    <property type="entry name" value="Lysozyme-like_dom_sf"/>
</dbReference>
<dbReference type="PANTHER" id="PTHR11407">
    <property type="entry name" value="LYSOZYME C"/>
    <property type="match status" value="1"/>
</dbReference>
<dbReference type="PANTHER" id="PTHR11407:SF28">
    <property type="entry name" value="LYSOZYME C"/>
    <property type="match status" value="1"/>
</dbReference>
<dbReference type="Pfam" id="PF00062">
    <property type="entry name" value="Lys"/>
    <property type="match status" value="1"/>
</dbReference>
<dbReference type="PRINTS" id="PR00137">
    <property type="entry name" value="LYSOZYME"/>
</dbReference>
<dbReference type="PRINTS" id="PR00135">
    <property type="entry name" value="LYZLACT"/>
</dbReference>
<dbReference type="SMART" id="SM00263">
    <property type="entry name" value="LYZ1"/>
    <property type="match status" value="1"/>
</dbReference>
<dbReference type="SUPFAM" id="SSF53955">
    <property type="entry name" value="Lysozyme-like"/>
    <property type="match status" value="1"/>
</dbReference>
<dbReference type="PROSITE" id="PS00128">
    <property type="entry name" value="GLYCOSYL_HYDROL_F22_1"/>
    <property type="match status" value="1"/>
</dbReference>
<dbReference type="PROSITE" id="PS51348">
    <property type="entry name" value="GLYCOSYL_HYDROL_F22_2"/>
    <property type="match status" value="1"/>
</dbReference>
<accession>P61634</accession>
<accession>P30200</accession>
<sequence length="148" mass="16420">MKAVIILGLVLLSVTVQGKIFERCELARTLKRLGLDGYRGISLANWVCLAKWESGYNTQATNYNPGDQSTDYGIFQINSHYWCNNGKTPGAVNACHISCNALLQDNIADAVTCAKRVVRDPQGIRAWVAWRNHCQNRDVSQYVQGCGV</sequence>
<protein>
    <recommendedName>
        <fullName>Lysozyme C</fullName>
        <ecNumber>3.2.1.17</ecNumber>
    </recommendedName>
    <alternativeName>
        <fullName>1,4-beta-N-acetylmuramidase C</fullName>
    </alternativeName>
</protein>
<keyword id="KW-0929">Antimicrobial</keyword>
<keyword id="KW-0081">Bacteriolytic enzyme</keyword>
<keyword id="KW-1015">Disulfide bond</keyword>
<keyword id="KW-0326">Glycosidase</keyword>
<keyword id="KW-0378">Hydrolase</keyword>
<keyword id="KW-0732">Signal</keyword>
<reference key="1">
    <citation type="journal article" date="1997" name="Nature">
        <title>Episodic adaptive evolution of primate lysozymes.</title>
        <authorList>
            <person name="Messier W."/>
            <person name="Stewart C.B."/>
        </authorList>
    </citation>
    <scope>NUCLEOTIDE SEQUENCE [GENOMIC DNA]</scope>
    <source>
        <tissue>Blood</tissue>
    </source>
</reference>
<name>LYSC_ERYPA</name>